<reference key="1">
    <citation type="journal article" date="2006" name="Proc. Natl. Acad. Sci. U.S.A.">
        <title>The complete genome sequence of a chronic atrophic gastritis Helicobacter pylori strain: evolution during disease progression.</title>
        <authorList>
            <person name="Oh J.D."/>
            <person name="Kling-Baeckhed H."/>
            <person name="Giannakis M."/>
            <person name="Xu J."/>
            <person name="Fulton R.S."/>
            <person name="Fulton L.A."/>
            <person name="Cordum H.S."/>
            <person name="Wang C."/>
            <person name="Elliott G."/>
            <person name="Edwards J."/>
            <person name="Mardis E.R."/>
            <person name="Engstrand L.G."/>
            <person name="Gordon J.I."/>
        </authorList>
    </citation>
    <scope>NUCLEOTIDE SEQUENCE [LARGE SCALE GENOMIC DNA]</scope>
    <source>
        <strain>HPAG1</strain>
    </source>
</reference>
<sequence>MHNDFNLLILSGPSGAGKSTLTKYLQEKIPKTHFSLSTTTRKPREGEVDGLHYNFVSEEEFKQGIEKGQFLEWAIVHNHYYGTSKIPVEKALKEGKIVIFDIDVQGHEILKKHYPNACSVFISTKNQEILKERLLLRGTDSKETIEKRLINAYKEMQCLESFDYLIINEDLEKSKEIILSIAKTLVHRLKAFNFEKICKAWKNESL</sequence>
<comment type="function">
    <text evidence="1">Essential for recycling GMP and indirectly, cGMP.</text>
</comment>
<comment type="catalytic activity">
    <reaction evidence="1">
        <text>GMP + ATP = GDP + ADP</text>
        <dbReference type="Rhea" id="RHEA:20780"/>
        <dbReference type="ChEBI" id="CHEBI:30616"/>
        <dbReference type="ChEBI" id="CHEBI:58115"/>
        <dbReference type="ChEBI" id="CHEBI:58189"/>
        <dbReference type="ChEBI" id="CHEBI:456216"/>
        <dbReference type="EC" id="2.7.4.8"/>
    </reaction>
</comment>
<comment type="subcellular location">
    <subcellularLocation>
        <location evidence="1">Cytoplasm</location>
    </subcellularLocation>
</comment>
<comment type="similarity">
    <text evidence="1">Belongs to the guanylate kinase family.</text>
</comment>
<protein>
    <recommendedName>
        <fullName evidence="1">Guanylate kinase</fullName>
        <ecNumber evidence="1">2.7.4.8</ecNumber>
    </recommendedName>
    <alternativeName>
        <fullName evidence="1">GMP kinase</fullName>
    </alternativeName>
</protein>
<evidence type="ECO:0000255" key="1">
    <source>
        <dbReference type="HAMAP-Rule" id="MF_00328"/>
    </source>
</evidence>
<gene>
    <name evidence="1" type="primary">gmk</name>
    <name type="ordered locus">HPAG1_0324</name>
</gene>
<proteinExistence type="inferred from homology"/>
<keyword id="KW-0067">ATP-binding</keyword>
<keyword id="KW-0963">Cytoplasm</keyword>
<keyword id="KW-0418">Kinase</keyword>
<keyword id="KW-0547">Nucleotide-binding</keyword>
<keyword id="KW-0808">Transferase</keyword>
<organism>
    <name type="scientific">Helicobacter pylori (strain HPAG1)</name>
    <dbReference type="NCBI Taxonomy" id="357544"/>
    <lineage>
        <taxon>Bacteria</taxon>
        <taxon>Pseudomonadati</taxon>
        <taxon>Campylobacterota</taxon>
        <taxon>Epsilonproteobacteria</taxon>
        <taxon>Campylobacterales</taxon>
        <taxon>Helicobacteraceae</taxon>
        <taxon>Helicobacter</taxon>
    </lineage>
</organism>
<accession>Q1CUI1</accession>
<feature type="chain" id="PRO_0000266335" description="Guanylate kinase">
    <location>
        <begin position="1"/>
        <end position="206"/>
    </location>
</feature>
<feature type="domain" description="Guanylate kinase-like" evidence="1">
    <location>
        <begin position="5"/>
        <end position="183"/>
    </location>
</feature>
<feature type="binding site" evidence="1">
    <location>
        <begin position="12"/>
        <end position="19"/>
    </location>
    <ligand>
        <name>ATP</name>
        <dbReference type="ChEBI" id="CHEBI:30616"/>
    </ligand>
</feature>
<name>KGUA_HELPH</name>
<dbReference type="EC" id="2.7.4.8" evidence="1"/>
<dbReference type="EMBL" id="CP000241">
    <property type="protein sequence ID" value="ABF84391.1"/>
    <property type="molecule type" value="Genomic_DNA"/>
</dbReference>
<dbReference type="RefSeq" id="WP_000551229.1">
    <property type="nucleotide sequence ID" value="NC_008086.1"/>
</dbReference>
<dbReference type="SMR" id="Q1CUI1"/>
<dbReference type="KEGG" id="hpa:HPAG1_0324"/>
<dbReference type="HOGENOM" id="CLU_001715_1_2_7"/>
<dbReference type="GO" id="GO:0005829">
    <property type="term" value="C:cytosol"/>
    <property type="evidence" value="ECO:0007669"/>
    <property type="project" value="TreeGrafter"/>
</dbReference>
<dbReference type="GO" id="GO:0005524">
    <property type="term" value="F:ATP binding"/>
    <property type="evidence" value="ECO:0007669"/>
    <property type="project" value="UniProtKB-UniRule"/>
</dbReference>
<dbReference type="GO" id="GO:0004385">
    <property type="term" value="F:guanylate kinase activity"/>
    <property type="evidence" value="ECO:0007669"/>
    <property type="project" value="UniProtKB-UniRule"/>
</dbReference>
<dbReference type="CDD" id="cd00071">
    <property type="entry name" value="GMPK"/>
    <property type="match status" value="1"/>
</dbReference>
<dbReference type="FunFam" id="3.30.63.10:FF:000002">
    <property type="entry name" value="Guanylate kinase 1"/>
    <property type="match status" value="1"/>
</dbReference>
<dbReference type="Gene3D" id="3.30.63.10">
    <property type="entry name" value="Guanylate Kinase phosphate binding domain"/>
    <property type="match status" value="1"/>
</dbReference>
<dbReference type="Gene3D" id="3.40.50.300">
    <property type="entry name" value="P-loop containing nucleotide triphosphate hydrolases"/>
    <property type="match status" value="1"/>
</dbReference>
<dbReference type="HAMAP" id="MF_00328">
    <property type="entry name" value="Guanylate_kinase"/>
    <property type="match status" value="1"/>
</dbReference>
<dbReference type="InterPro" id="IPR008145">
    <property type="entry name" value="GK/Ca_channel_bsu"/>
</dbReference>
<dbReference type="InterPro" id="IPR008144">
    <property type="entry name" value="Guanylate_kin-like_dom"/>
</dbReference>
<dbReference type="InterPro" id="IPR017665">
    <property type="entry name" value="Guanylate_kinase"/>
</dbReference>
<dbReference type="InterPro" id="IPR020590">
    <property type="entry name" value="Guanylate_kinase_CS"/>
</dbReference>
<dbReference type="InterPro" id="IPR027417">
    <property type="entry name" value="P-loop_NTPase"/>
</dbReference>
<dbReference type="NCBIfam" id="TIGR03263">
    <property type="entry name" value="guanyl_kin"/>
    <property type="match status" value="1"/>
</dbReference>
<dbReference type="PANTHER" id="PTHR23117:SF13">
    <property type="entry name" value="GUANYLATE KINASE"/>
    <property type="match status" value="1"/>
</dbReference>
<dbReference type="PANTHER" id="PTHR23117">
    <property type="entry name" value="GUANYLATE KINASE-RELATED"/>
    <property type="match status" value="1"/>
</dbReference>
<dbReference type="Pfam" id="PF00625">
    <property type="entry name" value="Guanylate_kin"/>
    <property type="match status" value="1"/>
</dbReference>
<dbReference type="SMART" id="SM00072">
    <property type="entry name" value="GuKc"/>
    <property type="match status" value="1"/>
</dbReference>
<dbReference type="SUPFAM" id="SSF52540">
    <property type="entry name" value="P-loop containing nucleoside triphosphate hydrolases"/>
    <property type="match status" value="1"/>
</dbReference>
<dbReference type="PROSITE" id="PS00856">
    <property type="entry name" value="GUANYLATE_KINASE_1"/>
    <property type="match status" value="1"/>
</dbReference>
<dbReference type="PROSITE" id="PS50052">
    <property type="entry name" value="GUANYLATE_KINASE_2"/>
    <property type="match status" value="1"/>
</dbReference>